<name>ASSY_CERS1</name>
<proteinExistence type="inferred from homology"/>
<feature type="chain" id="PRO_1000000428" description="Argininosuccinate synthase">
    <location>
        <begin position="1"/>
        <end position="408"/>
    </location>
</feature>
<feature type="binding site" evidence="1">
    <location>
        <begin position="10"/>
        <end position="18"/>
    </location>
    <ligand>
        <name>ATP</name>
        <dbReference type="ChEBI" id="CHEBI:30616"/>
    </ligand>
</feature>
<feature type="binding site" evidence="1">
    <location>
        <position position="37"/>
    </location>
    <ligand>
        <name>ATP</name>
        <dbReference type="ChEBI" id="CHEBI:30616"/>
    </ligand>
</feature>
<feature type="binding site" evidence="1">
    <location>
        <position position="90"/>
    </location>
    <ligand>
        <name>L-citrulline</name>
        <dbReference type="ChEBI" id="CHEBI:57743"/>
    </ligand>
</feature>
<feature type="binding site" evidence="1">
    <location>
        <position position="95"/>
    </location>
    <ligand>
        <name>L-citrulline</name>
        <dbReference type="ChEBI" id="CHEBI:57743"/>
    </ligand>
</feature>
<feature type="binding site" evidence="1">
    <location>
        <position position="120"/>
    </location>
    <ligand>
        <name>ATP</name>
        <dbReference type="ChEBI" id="CHEBI:30616"/>
    </ligand>
</feature>
<feature type="binding site" evidence="1">
    <location>
        <position position="122"/>
    </location>
    <ligand>
        <name>L-aspartate</name>
        <dbReference type="ChEBI" id="CHEBI:29991"/>
    </ligand>
</feature>
<feature type="binding site" evidence="1">
    <location>
        <position position="126"/>
    </location>
    <ligand>
        <name>L-aspartate</name>
        <dbReference type="ChEBI" id="CHEBI:29991"/>
    </ligand>
</feature>
<feature type="binding site" evidence="1">
    <location>
        <position position="126"/>
    </location>
    <ligand>
        <name>L-citrulline</name>
        <dbReference type="ChEBI" id="CHEBI:57743"/>
    </ligand>
</feature>
<feature type="binding site" evidence="1">
    <location>
        <position position="127"/>
    </location>
    <ligand>
        <name>L-aspartate</name>
        <dbReference type="ChEBI" id="CHEBI:29991"/>
    </ligand>
</feature>
<feature type="binding site" evidence="1">
    <location>
        <position position="130"/>
    </location>
    <ligand>
        <name>L-citrulline</name>
        <dbReference type="ChEBI" id="CHEBI:57743"/>
    </ligand>
</feature>
<feature type="binding site" evidence="1">
    <location>
        <position position="181"/>
    </location>
    <ligand>
        <name>L-citrulline</name>
        <dbReference type="ChEBI" id="CHEBI:57743"/>
    </ligand>
</feature>
<feature type="binding site" evidence="1">
    <location>
        <position position="190"/>
    </location>
    <ligand>
        <name>L-citrulline</name>
        <dbReference type="ChEBI" id="CHEBI:57743"/>
    </ligand>
</feature>
<feature type="binding site" evidence="1">
    <location>
        <position position="266"/>
    </location>
    <ligand>
        <name>L-citrulline</name>
        <dbReference type="ChEBI" id="CHEBI:57743"/>
    </ligand>
</feature>
<feature type="binding site" evidence="1">
    <location>
        <position position="278"/>
    </location>
    <ligand>
        <name>L-citrulline</name>
        <dbReference type="ChEBI" id="CHEBI:57743"/>
    </ligand>
</feature>
<organism>
    <name type="scientific">Cereibacter sphaeroides (strain ATCC 17029 / ATH 2.4.9)</name>
    <name type="common">Rhodobacter sphaeroides</name>
    <dbReference type="NCBI Taxonomy" id="349101"/>
    <lineage>
        <taxon>Bacteria</taxon>
        <taxon>Pseudomonadati</taxon>
        <taxon>Pseudomonadota</taxon>
        <taxon>Alphaproteobacteria</taxon>
        <taxon>Rhodobacterales</taxon>
        <taxon>Paracoccaceae</taxon>
        <taxon>Cereibacter</taxon>
    </lineage>
</organism>
<accession>A3PNQ9</accession>
<comment type="catalytic activity">
    <reaction evidence="1">
        <text>L-citrulline + L-aspartate + ATP = 2-(N(omega)-L-arginino)succinate + AMP + diphosphate + H(+)</text>
        <dbReference type="Rhea" id="RHEA:10932"/>
        <dbReference type="ChEBI" id="CHEBI:15378"/>
        <dbReference type="ChEBI" id="CHEBI:29991"/>
        <dbReference type="ChEBI" id="CHEBI:30616"/>
        <dbReference type="ChEBI" id="CHEBI:33019"/>
        <dbReference type="ChEBI" id="CHEBI:57472"/>
        <dbReference type="ChEBI" id="CHEBI:57743"/>
        <dbReference type="ChEBI" id="CHEBI:456215"/>
        <dbReference type="EC" id="6.3.4.5"/>
    </reaction>
</comment>
<comment type="pathway">
    <text evidence="1">Amino-acid biosynthesis; L-arginine biosynthesis; L-arginine from L-ornithine and carbamoyl phosphate: step 2/3.</text>
</comment>
<comment type="subunit">
    <text evidence="1">Homotetramer.</text>
</comment>
<comment type="subcellular location">
    <subcellularLocation>
        <location evidence="1">Cytoplasm</location>
    </subcellularLocation>
</comment>
<comment type="similarity">
    <text evidence="1">Belongs to the argininosuccinate synthase family. Type 1 subfamily.</text>
</comment>
<evidence type="ECO:0000255" key="1">
    <source>
        <dbReference type="HAMAP-Rule" id="MF_00005"/>
    </source>
</evidence>
<dbReference type="EC" id="6.3.4.5" evidence="1"/>
<dbReference type="EMBL" id="CP000577">
    <property type="protein sequence ID" value="ABN77975.1"/>
    <property type="molecule type" value="Genomic_DNA"/>
</dbReference>
<dbReference type="RefSeq" id="WP_002721701.1">
    <property type="nucleotide sequence ID" value="NC_009049.1"/>
</dbReference>
<dbReference type="SMR" id="A3PNQ9"/>
<dbReference type="KEGG" id="rsh:Rsph17029_2873"/>
<dbReference type="HOGENOM" id="CLU_032784_4_2_5"/>
<dbReference type="UniPathway" id="UPA00068">
    <property type="reaction ID" value="UER00113"/>
</dbReference>
<dbReference type="GO" id="GO:0005737">
    <property type="term" value="C:cytoplasm"/>
    <property type="evidence" value="ECO:0007669"/>
    <property type="project" value="UniProtKB-SubCell"/>
</dbReference>
<dbReference type="GO" id="GO:0004055">
    <property type="term" value="F:argininosuccinate synthase activity"/>
    <property type="evidence" value="ECO:0007669"/>
    <property type="project" value="UniProtKB-UniRule"/>
</dbReference>
<dbReference type="GO" id="GO:0005524">
    <property type="term" value="F:ATP binding"/>
    <property type="evidence" value="ECO:0007669"/>
    <property type="project" value="UniProtKB-UniRule"/>
</dbReference>
<dbReference type="GO" id="GO:0000053">
    <property type="term" value="P:argininosuccinate metabolic process"/>
    <property type="evidence" value="ECO:0007669"/>
    <property type="project" value="TreeGrafter"/>
</dbReference>
<dbReference type="GO" id="GO:0006526">
    <property type="term" value="P:L-arginine biosynthetic process"/>
    <property type="evidence" value="ECO:0007669"/>
    <property type="project" value="UniProtKB-UniRule"/>
</dbReference>
<dbReference type="GO" id="GO:0000050">
    <property type="term" value="P:urea cycle"/>
    <property type="evidence" value="ECO:0007669"/>
    <property type="project" value="TreeGrafter"/>
</dbReference>
<dbReference type="CDD" id="cd01999">
    <property type="entry name" value="ASS"/>
    <property type="match status" value="1"/>
</dbReference>
<dbReference type="FunFam" id="3.40.50.620:FF:000019">
    <property type="entry name" value="Argininosuccinate synthase"/>
    <property type="match status" value="1"/>
</dbReference>
<dbReference type="FunFam" id="3.90.1260.10:FF:000007">
    <property type="entry name" value="Argininosuccinate synthase"/>
    <property type="match status" value="1"/>
</dbReference>
<dbReference type="Gene3D" id="3.90.1260.10">
    <property type="entry name" value="Argininosuccinate synthetase, chain A, domain 2"/>
    <property type="match status" value="1"/>
</dbReference>
<dbReference type="Gene3D" id="3.40.50.620">
    <property type="entry name" value="HUPs"/>
    <property type="match status" value="1"/>
</dbReference>
<dbReference type="Gene3D" id="1.20.5.470">
    <property type="entry name" value="Single helix bin"/>
    <property type="match status" value="1"/>
</dbReference>
<dbReference type="HAMAP" id="MF_00005">
    <property type="entry name" value="Arg_succ_synth_type1"/>
    <property type="match status" value="1"/>
</dbReference>
<dbReference type="InterPro" id="IPR048268">
    <property type="entry name" value="Arginosuc_syn_C"/>
</dbReference>
<dbReference type="InterPro" id="IPR048267">
    <property type="entry name" value="Arginosuc_syn_N"/>
</dbReference>
<dbReference type="InterPro" id="IPR001518">
    <property type="entry name" value="Arginosuc_synth"/>
</dbReference>
<dbReference type="InterPro" id="IPR018223">
    <property type="entry name" value="Arginosuc_synth_CS"/>
</dbReference>
<dbReference type="InterPro" id="IPR023434">
    <property type="entry name" value="Arginosuc_synth_type_1_subfam"/>
</dbReference>
<dbReference type="InterPro" id="IPR024074">
    <property type="entry name" value="AS_cat/multimer_dom_body"/>
</dbReference>
<dbReference type="InterPro" id="IPR014729">
    <property type="entry name" value="Rossmann-like_a/b/a_fold"/>
</dbReference>
<dbReference type="NCBIfam" id="TIGR00032">
    <property type="entry name" value="argG"/>
    <property type="match status" value="1"/>
</dbReference>
<dbReference type="NCBIfam" id="NF001770">
    <property type="entry name" value="PRK00509.1"/>
    <property type="match status" value="1"/>
</dbReference>
<dbReference type="PANTHER" id="PTHR11587">
    <property type="entry name" value="ARGININOSUCCINATE SYNTHASE"/>
    <property type="match status" value="1"/>
</dbReference>
<dbReference type="PANTHER" id="PTHR11587:SF2">
    <property type="entry name" value="ARGININOSUCCINATE SYNTHASE"/>
    <property type="match status" value="1"/>
</dbReference>
<dbReference type="Pfam" id="PF20979">
    <property type="entry name" value="Arginosuc_syn_C"/>
    <property type="match status" value="1"/>
</dbReference>
<dbReference type="Pfam" id="PF00764">
    <property type="entry name" value="Arginosuc_synth"/>
    <property type="match status" value="1"/>
</dbReference>
<dbReference type="SUPFAM" id="SSF52402">
    <property type="entry name" value="Adenine nucleotide alpha hydrolases-like"/>
    <property type="match status" value="1"/>
</dbReference>
<dbReference type="SUPFAM" id="SSF69864">
    <property type="entry name" value="Argininosuccinate synthetase, C-terminal domain"/>
    <property type="match status" value="1"/>
</dbReference>
<dbReference type="PROSITE" id="PS00564">
    <property type="entry name" value="ARGININOSUCCIN_SYN_1"/>
    <property type="match status" value="1"/>
</dbReference>
<dbReference type="PROSITE" id="PS00565">
    <property type="entry name" value="ARGININOSUCCIN_SYN_2"/>
    <property type="match status" value="1"/>
</dbReference>
<protein>
    <recommendedName>
        <fullName evidence="1">Argininosuccinate synthase</fullName>
        <ecNumber evidence="1">6.3.4.5</ecNumber>
    </recommendedName>
    <alternativeName>
        <fullName evidence="1">Citrulline--aspartate ligase</fullName>
    </alternativeName>
</protein>
<sequence>MSAPKKVVLAYSGGLDTSIILKWLQTEYGCEVVTFTADLGQGEELEPAREKAVMLGIKPENIFIEDVREEFVRDFVFPMFRANALYEGLYLLGTSIARPLIAKRLVEIAAQTGADAVAHGATGKGNDQVRFELTAYALDPAIKVIAPWREWDLTSRTKLLEFAEQNQIPIAKNKRGEAPFSVDANLLHTSSEGRVLENPGEEAPDYVYQRTVDPEKAPDAPEFVEIAFEKGDAVAINGEAMSPATILTKLNELGGKHGVGRLDLVENRFVGMKSRGIYETPGGTILLEAHRGIEQITLDSGAGHLKDSIMPRYAELIYNGFWYSPEREMLQALIDKSQEHVTGTVRVKLYKGFARTVARWSEHSLYSEKHVTFEEDAGAYDQKDAAGFIRLNALRLKLIATRNARVKG</sequence>
<keyword id="KW-0028">Amino-acid biosynthesis</keyword>
<keyword id="KW-0055">Arginine biosynthesis</keyword>
<keyword id="KW-0067">ATP-binding</keyword>
<keyword id="KW-0963">Cytoplasm</keyword>
<keyword id="KW-0436">Ligase</keyword>
<keyword id="KW-0547">Nucleotide-binding</keyword>
<reference key="1">
    <citation type="submission" date="2007-02" db="EMBL/GenBank/DDBJ databases">
        <title>Complete sequence of chromosome 1 of Rhodobacter sphaeroides ATCC 17029.</title>
        <authorList>
            <person name="Copeland A."/>
            <person name="Lucas S."/>
            <person name="Lapidus A."/>
            <person name="Barry K."/>
            <person name="Detter J.C."/>
            <person name="Glavina del Rio T."/>
            <person name="Hammon N."/>
            <person name="Israni S."/>
            <person name="Dalin E."/>
            <person name="Tice H."/>
            <person name="Pitluck S."/>
            <person name="Kiss H."/>
            <person name="Brettin T."/>
            <person name="Bruce D."/>
            <person name="Han C."/>
            <person name="Tapia R."/>
            <person name="Gilna P."/>
            <person name="Schmutz J."/>
            <person name="Larimer F."/>
            <person name="Land M."/>
            <person name="Hauser L."/>
            <person name="Kyrpides N."/>
            <person name="Mikhailova N."/>
            <person name="Richardson P."/>
            <person name="Mackenzie C."/>
            <person name="Choudhary M."/>
            <person name="Donohue T.J."/>
            <person name="Kaplan S."/>
        </authorList>
    </citation>
    <scope>NUCLEOTIDE SEQUENCE [LARGE SCALE GENOMIC DNA]</scope>
    <source>
        <strain>ATCC 17029 / ATH 2.4.9</strain>
    </source>
</reference>
<gene>
    <name evidence="1" type="primary">argG</name>
    <name type="ordered locus">Rsph17029_2873</name>
</gene>